<evidence type="ECO:0000255" key="1">
    <source>
        <dbReference type="HAMAP-Rule" id="MF_00159"/>
    </source>
</evidence>
<reference key="1">
    <citation type="journal article" date="2008" name="J. Biotechnol.">
        <title>The genome of Xanthomonas campestris pv. campestris B100 and its use for the reconstruction of metabolic pathways involved in xanthan biosynthesis.</title>
        <authorList>
            <person name="Vorhoelter F.-J."/>
            <person name="Schneiker S."/>
            <person name="Goesmann A."/>
            <person name="Krause L."/>
            <person name="Bekel T."/>
            <person name="Kaiser O."/>
            <person name="Linke B."/>
            <person name="Patschkowski T."/>
            <person name="Rueckert C."/>
            <person name="Schmid J."/>
            <person name="Sidhu V.K."/>
            <person name="Sieber V."/>
            <person name="Tauch A."/>
            <person name="Watt S.A."/>
            <person name="Weisshaar B."/>
            <person name="Becker A."/>
            <person name="Niehaus K."/>
            <person name="Puehler A."/>
        </authorList>
    </citation>
    <scope>NUCLEOTIDE SEQUENCE [LARGE SCALE GENOMIC DNA]</scope>
    <source>
        <strain>B100</strain>
    </source>
</reference>
<accession>B0RTS9</accession>
<name>ISPG_XANCB</name>
<keyword id="KW-0004">4Fe-4S</keyword>
<keyword id="KW-0408">Iron</keyword>
<keyword id="KW-0411">Iron-sulfur</keyword>
<keyword id="KW-0414">Isoprene biosynthesis</keyword>
<keyword id="KW-0479">Metal-binding</keyword>
<keyword id="KW-0560">Oxidoreductase</keyword>
<dbReference type="EC" id="1.17.7.3" evidence="1"/>
<dbReference type="EMBL" id="AM920689">
    <property type="protein sequence ID" value="CAP51843.1"/>
    <property type="molecule type" value="Genomic_DNA"/>
</dbReference>
<dbReference type="SMR" id="B0RTS9"/>
<dbReference type="KEGG" id="xca:xcc-b100_2483"/>
<dbReference type="HOGENOM" id="CLU_042258_1_0_6"/>
<dbReference type="UniPathway" id="UPA00056">
    <property type="reaction ID" value="UER00096"/>
</dbReference>
<dbReference type="Proteomes" id="UP000001188">
    <property type="component" value="Chromosome"/>
</dbReference>
<dbReference type="GO" id="GO:0051539">
    <property type="term" value="F:4 iron, 4 sulfur cluster binding"/>
    <property type="evidence" value="ECO:0007669"/>
    <property type="project" value="UniProtKB-UniRule"/>
</dbReference>
<dbReference type="GO" id="GO:0046429">
    <property type="term" value="F:4-hydroxy-3-methylbut-2-en-1-yl diphosphate synthase activity (ferredoxin)"/>
    <property type="evidence" value="ECO:0007669"/>
    <property type="project" value="UniProtKB-UniRule"/>
</dbReference>
<dbReference type="GO" id="GO:0141197">
    <property type="term" value="F:4-hydroxy-3-methylbut-2-enyl-diphosphate synthase activity (flavodoxin)"/>
    <property type="evidence" value="ECO:0007669"/>
    <property type="project" value="UniProtKB-EC"/>
</dbReference>
<dbReference type="GO" id="GO:0005506">
    <property type="term" value="F:iron ion binding"/>
    <property type="evidence" value="ECO:0007669"/>
    <property type="project" value="InterPro"/>
</dbReference>
<dbReference type="GO" id="GO:0019288">
    <property type="term" value="P:isopentenyl diphosphate biosynthetic process, methylerythritol 4-phosphate pathway"/>
    <property type="evidence" value="ECO:0007669"/>
    <property type="project" value="UniProtKB-UniRule"/>
</dbReference>
<dbReference type="GO" id="GO:0016114">
    <property type="term" value="P:terpenoid biosynthetic process"/>
    <property type="evidence" value="ECO:0007669"/>
    <property type="project" value="InterPro"/>
</dbReference>
<dbReference type="FunFam" id="3.20.20.20:FF:000001">
    <property type="entry name" value="4-hydroxy-3-methylbut-2-en-1-yl diphosphate synthase (flavodoxin)"/>
    <property type="match status" value="1"/>
</dbReference>
<dbReference type="FunFam" id="3.30.413.10:FF:000012">
    <property type="entry name" value="4-hydroxy-3-methylbut-2-en-1-yl diphosphate synthase (flavodoxin)"/>
    <property type="match status" value="1"/>
</dbReference>
<dbReference type="Gene3D" id="3.20.20.20">
    <property type="entry name" value="Dihydropteroate synthase-like"/>
    <property type="match status" value="1"/>
</dbReference>
<dbReference type="Gene3D" id="3.30.413.10">
    <property type="entry name" value="Sulfite Reductase Hemoprotein, domain 1"/>
    <property type="match status" value="1"/>
</dbReference>
<dbReference type="HAMAP" id="MF_00159">
    <property type="entry name" value="IspG"/>
    <property type="match status" value="1"/>
</dbReference>
<dbReference type="InterPro" id="IPR011005">
    <property type="entry name" value="Dihydropteroate_synth-like_sf"/>
</dbReference>
<dbReference type="InterPro" id="IPR016425">
    <property type="entry name" value="IspG_bac"/>
</dbReference>
<dbReference type="InterPro" id="IPR004588">
    <property type="entry name" value="IspG_bac-typ"/>
</dbReference>
<dbReference type="InterPro" id="IPR045854">
    <property type="entry name" value="NO2/SO3_Rdtase_4Fe4S_sf"/>
</dbReference>
<dbReference type="NCBIfam" id="TIGR00612">
    <property type="entry name" value="ispG_gcpE"/>
    <property type="match status" value="1"/>
</dbReference>
<dbReference type="NCBIfam" id="NF001540">
    <property type="entry name" value="PRK00366.1"/>
    <property type="match status" value="1"/>
</dbReference>
<dbReference type="PANTHER" id="PTHR30454">
    <property type="entry name" value="4-HYDROXY-3-METHYLBUT-2-EN-1-YL DIPHOSPHATE SYNTHASE"/>
    <property type="match status" value="1"/>
</dbReference>
<dbReference type="PANTHER" id="PTHR30454:SF0">
    <property type="entry name" value="4-HYDROXY-3-METHYLBUT-2-EN-1-YL DIPHOSPHATE SYNTHASE (FERREDOXIN), CHLOROPLASTIC"/>
    <property type="match status" value="1"/>
</dbReference>
<dbReference type="Pfam" id="PF04551">
    <property type="entry name" value="GcpE"/>
    <property type="match status" value="1"/>
</dbReference>
<dbReference type="PIRSF" id="PIRSF004640">
    <property type="entry name" value="IspG"/>
    <property type="match status" value="1"/>
</dbReference>
<organism>
    <name type="scientific">Xanthomonas campestris pv. campestris (strain B100)</name>
    <dbReference type="NCBI Taxonomy" id="509169"/>
    <lineage>
        <taxon>Bacteria</taxon>
        <taxon>Pseudomonadati</taxon>
        <taxon>Pseudomonadota</taxon>
        <taxon>Gammaproteobacteria</taxon>
        <taxon>Lysobacterales</taxon>
        <taxon>Lysobacteraceae</taxon>
        <taxon>Xanthomonas</taxon>
    </lineage>
</organism>
<feature type="chain" id="PRO_1000097196" description="4-hydroxy-3-methylbut-2-en-1-yl diphosphate synthase (flavodoxin)">
    <location>
        <begin position="1"/>
        <end position="421"/>
    </location>
</feature>
<feature type="binding site" evidence="1">
    <location>
        <position position="311"/>
    </location>
    <ligand>
        <name>[4Fe-4S] cluster</name>
        <dbReference type="ChEBI" id="CHEBI:49883"/>
    </ligand>
</feature>
<feature type="binding site" evidence="1">
    <location>
        <position position="314"/>
    </location>
    <ligand>
        <name>[4Fe-4S] cluster</name>
        <dbReference type="ChEBI" id="CHEBI:49883"/>
    </ligand>
</feature>
<feature type="binding site" evidence="1">
    <location>
        <position position="357"/>
    </location>
    <ligand>
        <name>[4Fe-4S] cluster</name>
        <dbReference type="ChEBI" id="CHEBI:49883"/>
    </ligand>
</feature>
<feature type="binding site" evidence="1">
    <location>
        <position position="364"/>
    </location>
    <ligand>
        <name>[4Fe-4S] cluster</name>
        <dbReference type="ChEBI" id="CHEBI:49883"/>
    </ligand>
</feature>
<comment type="function">
    <text evidence="1">Converts 2C-methyl-D-erythritol 2,4-cyclodiphosphate (ME-2,4cPP) into 1-hydroxy-2-methyl-2-(E)-butenyl 4-diphosphate.</text>
</comment>
<comment type="catalytic activity">
    <reaction evidence="1">
        <text>(2E)-4-hydroxy-3-methylbut-2-enyl diphosphate + oxidized [flavodoxin] + H2O + 2 H(+) = 2-C-methyl-D-erythritol 2,4-cyclic diphosphate + reduced [flavodoxin]</text>
        <dbReference type="Rhea" id="RHEA:43604"/>
        <dbReference type="Rhea" id="RHEA-COMP:10622"/>
        <dbReference type="Rhea" id="RHEA-COMP:10623"/>
        <dbReference type="ChEBI" id="CHEBI:15377"/>
        <dbReference type="ChEBI" id="CHEBI:15378"/>
        <dbReference type="ChEBI" id="CHEBI:57618"/>
        <dbReference type="ChEBI" id="CHEBI:58210"/>
        <dbReference type="ChEBI" id="CHEBI:58483"/>
        <dbReference type="ChEBI" id="CHEBI:128753"/>
        <dbReference type="EC" id="1.17.7.3"/>
    </reaction>
</comment>
<comment type="cofactor">
    <cofactor evidence="1">
        <name>[4Fe-4S] cluster</name>
        <dbReference type="ChEBI" id="CHEBI:49883"/>
    </cofactor>
    <text evidence="1">Binds 1 [4Fe-4S] cluster.</text>
</comment>
<comment type="pathway">
    <text evidence="1">Isoprenoid biosynthesis; isopentenyl diphosphate biosynthesis via DXP pathway; isopentenyl diphosphate from 1-deoxy-D-xylulose 5-phosphate: step 5/6.</text>
</comment>
<comment type="similarity">
    <text evidence="1">Belongs to the IspG family.</text>
</comment>
<proteinExistence type="inferred from homology"/>
<sequence length="421" mass="45248">MYDAVTRPSPPADASAWPRRITQAVKVGNVIVGGGHPVVVQSMTNTDTADIAGSVKQVAELWRAGSEMVRLTVNNAESAAAIPRIVEKLRMMGIEVPLIGDFHYNGHQLLTAEPACAEALAKYRINPGNVGFGKKKDLQFAQLIEFAIQYDKPVRIGANWGSLDQALAAQLMDENSKRETPWDAGRVLREALIRSAVDSAERAVELGLPRERIILSAKVSGVQELIAVYRDMAARCDFALHLGLTEAGIGSKGIVASAAALSVLLQEGIGDTIRISLTPEPGQSRTQEVIVAQELLQTTGQRAFTPLVTACPGCGRTTSEFFQELAGVVQNHVRAKMPEWKISNPGAENMTLAVMGCVVNGPGESRHANIGISLPGTGEAPSAPVFVDGEKTVTLRGENIAYEFIDLIDQYVERTYVRRAG</sequence>
<gene>
    <name evidence="1" type="primary">ispG</name>
    <name type="ordered locus">xcc-b100_2483</name>
</gene>
<protein>
    <recommendedName>
        <fullName evidence="1">4-hydroxy-3-methylbut-2-en-1-yl diphosphate synthase (flavodoxin)</fullName>
        <ecNumber evidence="1">1.17.7.3</ecNumber>
    </recommendedName>
    <alternativeName>
        <fullName evidence="1">1-hydroxy-2-methyl-2-(E)-butenyl 4-diphosphate synthase</fullName>
    </alternativeName>
</protein>